<reference key="1">
    <citation type="journal article" date="2005" name="Nature">
        <title>The genome of the social amoeba Dictyostelium discoideum.</title>
        <authorList>
            <person name="Eichinger L."/>
            <person name="Pachebat J.A."/>
            <person name="Gloeckner G."/>
            <person name="Rajandream M.A."/>
            <person name="Sucgang R."/>
            <person name="Berriman M."/>
            <person name="Song J."/>
            <person name="Olsen R."/>
            <person name="Szafranski K."/>
            <person name="Xu Q."/>
            <person name="Tunggal B."/>
            <person name="Kummerfeld S."/>
            <person name="Madera M."/>
            <person name="Konfortov B.A."/>
            <person name="Rivero F."/>
            <person name="Bankier A.T."/>
            <person name="Lehmann R."/>
            <person name="Hamlin N."/>
            <person name="Davies R."/>
            <person name="Gaudet P."/>
            <person name="Fey P."/>
            <person name="Pilcher K."/>
            <person name="Chen G."/>
            <person name="Saunders D."/>
            <person name="Sodergren E.J."/>
            <person name="Davis P."/>
            <person name="Kerhornou A."/>
            <person name="Nie X."/>
            <person name="Hall N."/>
            <person name="Anjard C."/>
            <person name="Hemphill L."/>
            <person name="Bason N."/>
            <person name="Farbrother P."/>
            <person name="Desany B."/>
            <person name="Just E."/>
            <person name="Morio T."/>
            <person name="Rost R."/>
            <person name="Churcher C.M."/>
            <person name="Cooper J."/>
            <person name="Haydock S."/>
            <person name="van Driessche N."/>
            <person name="Cronin A."/>
            <person name="Goodhead I."/>
            <person name="Muzny D.M."/>
            <person name="Mourier T."/>
            <person name="Pain A."/>
            <person name="Lu M."/>
            <person name="Harper D."/>
            <person name="Lindsay R."/>
            <person name="Hauser H."/>
            <person name="James K.D."/>
            <person name="Quiles M."/>
            <person name="Madan Babu M."/>
            <person name="Saito T."/>
            <person name="Buchrieser C."/>
            <person name="Wardroper A."/>
            <person name="Felder M."/>
            <person name="Thangavelu M."/>
            <person name="Johnson D."/>
            <person name="Knights A."/>
            <person name="Loulseged H."/>
            <person name="Mungall K.L."/>
            <person name="Oliver K."/>
            <person name="Price C."/>
            <person name="Quail M.A."/>
            <person name="Urushihara H."/>
            <person name="Hernandez J."/>
            <person name="Rabbinowitsch E."/>
            <person name="Steffen D."/>
            <person name="Sanders M."/>
            <person name="Ma J."/>
            <person name="Kohara Y."/>
            <person name="Sharp S."/>
            <person name="Simmonds M.N."/>
            <person name="Spiegler S."/>
            <person name="Tivey A."/>
            <person name="Sugano S."/>
            <person name="White B."/>
            <person name="Walker D."/>
            <person name="Woodward J.R."/>
            <person name="Winckler T."/>
            <person name="Tanaka Y."/>
            <person name="Shaulsky G."/>
            <person name="Schleicher M."/>
            <person name="Weinstock G.M."/>
            <person name="Rosenthal A."/>
            <person name="Cox E.C."/>
            <person name="Chisholm R.L."/>
            <person name="Gibbs R.A."/>
            <person name="Loomis W.F."/>
            <person name="Platzer M."/>
            <person name="Kay R.R."/>
            <person name="Williams J.G."/>
            <person name="Dear P.H."/>
            <person name="Noegel A.A."/>
            <person name="Barrell B.G."/>
            <person name="Kuspa A."/>
        </authorList>
    </citation>
    <scope>NUCLEOTIDE SEQUENCE [LARGE SCALE GENOMIC DNA]</scope>
    <source>
        <strain>AX4</strain>
    </source>
</reference>
<reference key="2">
    <citation type="journal article" date="2006" name="Eur. J. Cell Biol.">
        <title>The Dictyostelium repertoire of seven transmembrane domain receptors.</title>
        <authorList>
            <person name="Prabhu Y."/>
            <person name="Eichinger L."/>
        </authorList>
    </citation>
    <scope>NOMENCLATURE</scope>
</reference>
<dbReference type="EMBL" id="AAFI02000187">
    <property type="protein sequence ID" value="EAS66812.1"/>
    <property type="molecule type" value="Genomic_DNA"/>
</dbReference>
<dbReference type="RefSeq" id="XP_001134495.1">
    <property type="nucleotide sequence ID" value="XM_001134495.1"/>
</dbReference>
<dbReference type="SMR" id="Q1ZXB0"/>
<dbReference type="FunCoup" id="Q1ZXB0">
    <property type="interactions" value="19"/>
</dbReference>
<dbReference type="STRING" id="44689.Q1ZXB0"/>
<dbReference type="GlyCosmos" id="Q1ZXB0">
    <property type="glycosylation" value="4 sites, No reported glycans"/>
</dbReference>
<dbReference type="GlyGen" id="Q1ZXB0">
    <property type="glycosylation" value="4 sites"/>
</dbReference>
<dbReference type="PaxDb" id="44689-DDB0231719"/>
<dbReference type="EnsemblProtists" id="EAS66812">
    <property type="protein sequence ID" value="EAS66812"/>
    <property type="gene ID" value="DDB_G0292064"/>
</dbReference>
<dbReference type="GeneID" id="8628485"/>
<dbReference type="KEGG" id="ddi:DDB_G0292064"/>
<dbReference type="dictyBase" id="DDB_G0292064">
    <property type="gene designation" value="fscF"/>
</dbReference>
<dbReference type="VEuPathDB" id="AmoebaDB:DDB_G0292064"/>
<dbReference type="eggNOG" id="ENOG502RF6Q">
    <property type="taxonomic scope" value="Eukaryota"/>
</dbReference>
<dbReference type="HOGENOM" id="CLU_036764_0_0_1"/>
<dbReference type="InParanoid" id="Q1ZXB0"/>
<dbReference type="OMA" id="FFTINEW"/>
<dbReference type="PhylomeDB" id="Q1ZXB0"/>
<dbReference type="PRO" id="PR:Q1ZXB0"/>
<dbReference type="Proteomes" id="UP000002195">
    <property type="component" value="Chromosome 6"/>
</dbReference>
<dbReference type="GO" id="GO:0016020">
    <property type="term" value="C:membrane"/>
    <property type="evidence" value="ECO:0007669"/>
    <property type="project" value="UniProtKB-SubCell"/>
</dbReference>
<dbReference type="Gene3D" id="1.20.1070.10">
    <property type="entry name" value="Rhodopsin 7-helix transmembrane proteins"/>
    <property type="match status" value="1"/>
</dbReference>
<dbReference type="InterPro" id="IPR050949">
    <property type="entry name" value="GPCR_Fz/Smo-like"/>
</dbReference>
<dbReference type="PANTHER" id="PTHR31787:SF7">
    <property type="entry name" value="FRIZZLED_SMOOTHENED-LIKE SANS CRD PROTEIN F-RELATED"/>
    <property type="match status" value="1"/>
</dbReference>
<dbReference type="PANTHER" id="PTHR31787">
    <property type="entry name" value="G-PROTEIN-COUPLED RECEPTOR GPCR FAMILY PROTEIN"/>
    <property type="match status" value="1"/>
</dbReference>
<evidence type="ECO:0000255" key="1"/>
<evidence type="ECO:0000256" key="2">
    <source>
        <dbReference type="SAM" id="MobiDB-lite"/>
    </source>
</evidence>
<evidence type="ECO:0000305" key="3"/>
<gene>
    <name type="primary">fscF</name>
    <name type="ORF">DDB_G0292064</name>
</gene>
<comment type="subcellular location">
    <subcellularLocation>
        <location evidence="3">Membrane</location>
        <topology evidence="3">Multi-pass membrane protein</topology>
    </subcellularLocation>
</comment>
<comment type="similarity">
    <text evidence="3">Belongs to the G-protein coupled receptor Fz/Smo family.</text>
</comment>
<organism>
    <name type="scientific">Dictyostelium discoideum</name>
    <name type="common">Social amoeba</name>
    <dbReference type="NCBI Taxonomy" id="44689"/>
    <lineage>
        <taxon>Eukaryota</taxon>
        <taxon>Amoebozoa</taxon>
        <taxon>Evosea</taxon>
        <taxon>Eumycetozoa</taxon>
        <taxon>Dictyostelia</taxon>
        <taxon>Dictyosteliales</taxon>
        <taxon>Dictyosteliaceae</taxon>
        <taxon>Dictyostelium</taxon>
    </lineage>
</organism>
<keyword id="KW-0325">Glycoprotein</keyword>
<keyword id="KW-0472">Membrane</keyword>
<keyword id="KW-0675">Receptor</keyword>
<keyword id="KW-1185">Reference proteome</keyword>
<keyword id="KW-0732">Signal</keyword>
<keyword id="KW-0812">Transmembrane</keyword>
<keyword id="KW-1133">Transmembrane helix</keyword>
<accession>Q1ZXB0</accession>
<feature type="signal peptide" evidence="1">
    <location>
        <begin position="1"/>
        <end position="30"/>
    </location>
</feature>
<feature type="chain" id="PRO_0000371359" description="Frizzled/smoothened-like sans CRD protein F">
    <location>
        <begin position="31"/>
        <end position="456"/>
    </location>
</feature>
<feature type="topological domain" description="Extracellular" evidence="1">
    <location>
        <begin position="31"/>
        <end position="92"/>
    </location>
</feature>
<feature type="transmembrane region" description="Helical; Name=1" evidence="1">
    <location>
        <begin position="93"/>
        <end position="113"/>
    </location>
</feature>
<feature type="topological domain" description="Cytoplasmic" evidence="1">
    <location>
        <begin position="114"/>
        <end position="127"/>
    </location>
</feature>
<feature type="transmembrane region" description="Helical; Name=2" evidence="1">
    <location>
        <begin position="128"/>
        <end position="148"/>
    </location>
</feature>
<feature type="topological domain" description="Extracellular" evidence="1">
    <location>
        <begin position="149"/>
        <end position="174"/>
    </location>
</feature>
<feature type="transmembrane region" description="Helical; Name=3" evidence="1">
    <location>
        <begin position="175"/>
        <end position="195"/>
    </location>
</feature>
<feature type="topological domain" description="Cytoplasmic" evidence="1">
    <location>
        <begin position="196"/>
        <end position="211"/>
    </location>
</feature>
<feature type="transmembrane region" description="Helical; Name=4" evidence="1">
    <location>
        <begin position="212"/>
        <end position="232"/>
    </location>
</feature>
<feature type="topological domain" description="Extracellular" evidence="1">
    <location>
        <begin position="233"/>
        <end position="252"/>
    </location>
</feature>
<feature type="transmembrane region" description="Helical; Name=5" evidence="1">
    <location>
        <begin position="253"/>
        <end position="273"/>
    </location>
</feature>
<feature type="topological domain" description="Cytoplasmic" evidence="1">
    <location>
        <begin position="274"/>
        <end position="297"/>
    </location>
</feature>
<feature type="transmembrane region" description="Helical; Name=6" evidence="1">
    <location>
        <begin position="298"/>
        <end position="318"/>
    </location>
</feature>
<feature type="topological domain" description="Extracellular" evidence="1">
    <location>
        <begin position="319"/>
        <end position="354"/>
    </location>
</feature>
<feature type="transmembrane region" description="Helical; Name=7" evidence="1">
    <location>
        <begin position="355"/>
        <end position="375"/>
    </location>
</feature>
<feature type="topological domain" description="Cytoplasmic" evidence="1">
    <location>
        <begin position="376"/>
        <end position="456"/>
    </location>
</feature>
<feature type="region of interest" description="Disordered" evidence="2">
    <location>
        <begin position="403"/>
        <end position="422"/>
    </location>
</feature>
<feature type="glycosylation site" description="N-linked (GlcNAc...) asparagine" evidence="1">
    <location>
        <position position="34"/>
    </location>
</feature>
<feature type="glycosylation site" description="N-linked (GlcNAc...) asparagine" evidence="1">
    <location>
        <position position="52"/>
    </location>
</feature>
<feature type="glycosylation site" description="N-linked (GlcNAc...) asparagine" evidence="1">
    <location>
        <position position="70"/>
    </location>
</feature>
<feature type="glycosylation site" description="N-linked (GlcNAc...) asparagine" evidence="1">
    <location>
        <position position="151"/>
    </location>
</feature>
<sequence length="456" mass="52173">MIFNNLKNQNKIINFLIIFYFLSFLKQIESQSINITSSSSSWQCRGDLVYRNVSNRIEDEKIGFNFVQYNGTYQSCVIPCPSPFFTINEWNKFLNMSLVMGTISFFSGLFLLVTYSPIVNKTHNRHTIGVMCMSFGVCLAMCSDMWNFGSNFTEKSICPSPGQYLSTSNARCLSSGIFLQFGGVFGFLNWTLLSFDLFMNIKGIITKNYDKYYVSGTFIIAIIFTFVPIVNDQYSMSYIGLGCWLGSAMYQLIFFWILLSICLIVSSVFIILILKEVYIIIKLSKQKTSLKGNIRPLICISITGFAFFYMFFYYISIVVEGDYYERVLNEYTDCLMDPTKDISECKSPRMSVASEFVFLLCLRLLGIGAFIFYGINNKVKKIWLNSYWFNNSFVEKYISRKSADNDKSNSNGSKVLYRTNNTNNNGSFNTGLESSIIEMSTNSNKEESSLNSVDEI</sequence>
<proteinExistence type="inferred from homology"/>
<name>FSCF_DICDI</name>
<protein>
    <recommendedName>
        <fullName>Frizzled/smoothened-like sans CRD protein F</fullName>
    </recommendedName>
</protein>